<evidence type="ECO:0000250" key="1"/>
<evidence type="ECO:0000250" key="2">
    <source>
        <dbReference type="UniProtKB" id="O15399"/>
    </source>
</evidence>
<evidence type="ECO:0000250" key="3">
    <source>
        <dbReference type="UniProtKB" id="P35438"/>
    </source>
</evidence>
<evidence type="ECO:0000250" key="4">
    <source>
        <dbReference type="UniProtKB" id="Q00959"/>
    </source>
</evidence>
<evidence type="ECO:0000250" key="5">
    <source>
        <dbReference type="UniProtKB" id="Q00960"/>
    </source>
</evidence>
<evidence type="ECO:0000250" key="6">
    <source>
        <dbReference type="UniProtKB" id="Q03391"/>
    </source>
</evidence>
<evidence type="ECO:0000250" key="7">
    <source>
        <dbReference type="UniProtKB" id="Q14957"/>
    </source>
</evidence>
<evidence type="ECO:0000255" key="8"/>
<evidence type="ECO:0000256" key="9">
    <source>
        <dbReference type="SAM" id="MobiDB-lite"/>
    </source>
</evidence>
<evidence type="ECO:0000269" key="10">
    <source>
    </source>
</evidence>
<evidence type="ECO:0000269" key="11">
    <source>
    </source>
</evidence>
<evidence type="ECO:0000269" key="12">
    <source>
    </source>
</evidence>
<evidence type="ECO:0000269" key="13">
    <source>
    </source>
</evidence>
<evidence type="ECO:0000269" key="14">
    <source>
    </source>
</evidence>
<evidence type="ECO:0000269" key="15">
    <source>
    </source>
</evidence>
<evidence type="ECO:0000303" key="16">
    <source>
    </source>
</evidence>
<evidence type="ECO:0000303" key="17">
    <source>
    </source>
</evidence>
<evidence type="ECO:0000305" key="18"/>
<evidence type="ECO:0000312" key="19">
    <source>
        <dbReference type="RGD" id="2740"/>
    </source>
</evidence>
<evidence type="ECO:0007744" key="20">
    <source>
        <dbReference type="PDB" id="3OEK"/>
    </source>
</evidence>
<evidence type="ECO:0007744" key="21">
    <source>
        <dbReference type="PDB" id="3OEL"/>
    </source>
</evidence>
<evidence type="ECO:0007744" key="22">
    <source>
        <dbReference type="PDB" id="3OEM"/>
    </source>
</evidence>
<evidence type="ECO:0007744" key="23">
    <source>
        <dbReference type="PDB" id="3OEN"/>
    </source>
</evidence>
<evidence type="ECO:0007744" key="24">
    <source>
        <dbReference type="PDB" id="4JWY"/>
    </source>
</evidence>
<evidence type="ECO:0007829" key="25">
    <source>
        <dbReference type="PDB" id="3OEK"/>
    </source>
</evidence>
<evidence type="ECO:0007829" key="26">
    <source>
        <dbReference type="PDB" id="3OEN"/>
    </source>
</evidence>
<protein>
    <recommendedName>
        <fullName evidence="18">Glutamate receptor ionotropic, NMDA 2D</fullName>
        <shortName evidence="16">GluN2D</shortName>
    </recommendedName>
    <alternativeName>
        <fullName evidence="6">Glutamate [NMDA] receptor subunit epsilon-4</fullName>
    </alternativeName>
    <alternativeName>
        <fullName>N-methyl D-aspartate receptor subtype 2D</fullName>
        <shortName evidence="2">NMDAR2D</shortName>
        <shortName>NR2D</shortName>
    </alternativeName>
</protein>
<feature type="signal peptide" evidence="8">
    <location>
        <begin position="1"/>
        <end position="27"/>
    </location>
</feature>
<feature type="chain" id="PRO_0000011585" description="Glutamate receptor ionotropic, NMDA 2D">
    <location>
        <begin position="28"/>
        <end position="1323"/>
    </location>
</feature>
<feature type="topological domain" description="Extracellular" evidence="2">
    <location>
        <begin position="28"/>
        <end position="579"/>
    </location>
</feature>
<feature type="transmembrane region" description="Helical" evidence="2">
    <location>
        <begin position="580"/>
        <end position="601"/>
    </location>
</feature>
<feature type="topological domain" description="Cytoplasmic" evidence="2">
    <location>
        <begin position="602"/>
        <end position="626"/>
    </location>
</feature>
<feature type="intramembrane region" description="Discontinuously helical" evidence="2">
    <location>
        <begin position="627"/>
        <end position="638"/>
    </location>
</feature>
<feature type="topological domain" description="Cytoplasmic" evidence="2">
    <location>
        <begin position="639"/>
        <end position="650"/>
    </location>
</feature>
<feature type="transmembrane region" description="Helical" evidence="2">
    <location>
        <begin position="651"/>
        <end position="671"/>
    </location>
</feature>
<feature type="topological domain" description="Extracellular" evidence="2">
    <location>
        <begin position="672"/>
        <end position="840"/>
    </location>
</feature>
<feature type="transmembrane region" description="Helical" evidence="2">
    <location>
        <begin position="841"/>
        <end position="864"/>
    </location>
</feature>
<feature type="topological domain" description="Cytoplasmic" evidence="2">
    <location>
        <begin position="865"/>
        <end position="1323"/>
    </location>
</feature>
<feature type="region of interest" description="Pore-forming" evidence="5">
    <location>
        <begin position="628"/>
        <end position="647"/>
    </location>
</feature>
<feature type="region of interest" description="Disordered" evidence="9">
    <location>
        <begin position="897"/>
        <end position="952"/>
    </location>
</feature>
<feature type="region of interest" description="Disordered" evidence="9">
    <location>
        <begin position="977"/>
        <end position="1112"/>
    </location>
</feature>
<feature type="region of interest" description="Disordered" evidence="9">
    <location>
        <begin position="1201"/>
        <end position="1323"/>
    </location>
</feature>
<feature type="short sequence motif" description="PDZ-binding">
    <location>
        <begin position="1321"/>
        <end position="1323"/>
    </location>
</feature>
<feature type="compositionally biased region" description="Pro residues" evidence="9">
    <location>
        <begin position="899"/>
        <end position="929"/>
    </location>
</feature>
<feature type="compositionally biased region" description="Basic and acidic residues" evidence="9">
    <location>
        <begin position="931"/>
        <end position="940"/>
    </location>
</feature>
<feature type="compositionally biased region" description="Low complexity" evidence="9">
    <location>
        <begin position="977"/>
        <end position="986"/>
    </location>
</feature>
<feature type="compositionally biased region" description="Pro residues" evidence="9">
    <location>
        <begin position="987"/>
        <end position="1001"/>
    </location>
</feature>
<feature type="compositionally biased region" description="Low complexity" evidence="9">
    <location>
        <begin position="1030"/>
        <end position="1039"/>
    </location>
</feature>
<feature type="compositionally biased region" description="Pro residues" evidence="9">
    <location>
        <begin position="1080"/>
        <end position="1092"/>
    </location>
</feature>
<feature type="compositionally biased region" description="Basic residues" evidence="9">
    <location>
        <begin position="1208"/>
        <end position="1228"/>
    </location>
</feature>
<feature type="binding site" evidence="10 21 23">
    <location>
        <position position="536"/>
    </location>
    <ligand>
        <name>L-glutamate</name>
        <dbReference type="ChEBI" id="CHEBI:29985"/>
    </ligand>
</feature>
<feature type="binding site" evidence="10 21 23">
    <location>
        <position position="538"/>
    </location>
    <ligand>
        <name>L-glutamate</name>
        <dbReference type="ChEBI" id="CHEBI:29985"/>
    </ligand>
</feature>
<feature type="binding site" evidence="10 21 23">
    <location>
        <position position="543"/>
    </location>
    <ligand>
        <name>L-glutamate</name>
        <dbReference type="ChEBI" id="CHEBI:29985"/>
    </ligand>
</feature>
<feature type="binding site" evidence="10 21 23">
    <location>
        <position position="714"/>
    </location>
    <ligand>
        <name>L-glutamate</name>
        <dbReference type="ChEBI" id="CHEBI:29985"/>
    </ligand>
</feature>
<feature type="binding site" evidence="10 21 23">
    <location>
        <position position="715"/>
    </location>
    <ligand>
        <name>L-glutamate</name>
        <dbReference type="ChEBI" id="CHEBI:29985"/>
    </ligand>
</feature>
<feature type="binding site" evidence="10 21 23">
    <location>
        <position position="756"/>
    </location>
    <ligand>
        <name>L-glutamate</name>
        <dbReference type="ChEBI" id="CHEBI:29985"/>
    </ligand>
</feature>
<feature type="site" description="Functional determinant of NMDA receptors" evidence="1">
    <location>
        <position position="639"/>
    </location>
</feature>
<feature type="modified residue" description="Omega-N-methylarginine" evidence="6">
    <location>
        <position position="1303"/>
    </location>
</feature>
<feature type="modified residue" description="Phosphoserine" evidence="6">
    <location>
        <position position="1313"/>
    </location>
</feature>
<feature type="glycosylation site" description="N-linked (GlcNAc...) asparagine" evidence="8">
    <location>
        <position position="89"/>
    </location>
</feature>
<feature type="glycosylation site" description="N-linked (GlcNAc...) asparagine" evidence="8">
    <location>
        <position position="349"/>
    </location>
</feature>
<feature type="glycosylation site" description="N-linked (GlcNAc...) asparagine" evidence="8">
    <location>
        <position position="363"/>
    </location>
</feature>
<feature type="glycosylation site" description="N-linked (GlcNAc...) asparagine" evidence="8">
    <location>
        <position position="381"/>
    </location>
</feature>
<feature type="glycosylation site" description="N-linked (GlcNAc...) asparagine" evidence="8">
    <location>
        <position position="464"/>
    </location>
</feature>
<feature type="glycosylation site" description="N-linked (GlcNAc...) asparagine" evidence="8">
    <location>
        <position position="566"/>
    </location>
</feature>
<feature type="glycosylation site" description="N-linked (GlcNAc...) asparagine" evidence="8">
    <location>
        <position position="712"/>
    </location>
</feature>
<feature type="disulfide bond" evidence="4">
    <location>
        <begin position="101"/>
        <end position="345"/>
    </location>
</feature>
<feature type="disulfide bond" evidence="10 11 20 21 22 23 24">
    <location>
        <begin position="452"/>
        <end position="480"/>
    </location>
</feature>
<feature type="disulfide bond" evidence="10 11 20 21 22 23 24">
    <location>
        <begin position="459"/>
        <end position="481"/>
    </location>
</feature>
<feature type="disulfide bond" evidence="10 11 20 21 22 23 24">
    <location>
        <begin position="770"/>
        <end position="825"/>
    </location>
</feature>
<feature type="splice variant" id="VSP_000136" description="In isoform 1." evidence="17">
    <original>CPRAAPTRRLTGPSRHARRCPHAAHWGPPLPTASHRRHRGGDLGTRRGSAHFSSLESEV</original>
    <variation>RPCPPHRTGDTGAGTWAHAGALRISPAWSPRYDAAPAPTPTPAAPSVSAGHGPRGRAKWTGPSWVGKDRNGPGRTPPGAASCAPTPFALGEL</variation>
    <location>
        <begin position="1265"/>
        <end position="1323"/>
    </location>
</feature>
<feature type="sequence conflict" description="In Ref. 3; AAA17833." evidence="18" ref="3">
    <original>A</original>
    <variation>V</variation>
    <location>
        <position position="25"/>
    </location>
</feature>
<feature type="sequence conflict" description="In Ref. 3; AAA17833." evidence="18" ref="3">
    <original>P</original>
    <variation>Q</variation>
    <location>
        <position position="47"/>
    </location>
</feature>
<feature type="sequence conflict" description="In Ref. 2; AAC37646." evidence="18" ref="2">
    <original>G</original>
    <variation>V</variation>
    <location>
        <position position="67"/>
    </location>
</feature>
<feature type="sequence conflict" description="In Ref. 2; AAC37646/AAC37647." evidence="18" ref="2">
    <original>R</original>
    <variation>P</variation>
    <location>
        <position position="94"/>
    </location>
</feature>
<feature type="sequence conflict" description="In Ref. 2; AAC37646/AAC37647." evidence="18" ref="2">
    <original>R</original>
    <variation>A</variation>
    <location>
        <position position="305"/>
    </location>
</feature>
<feature type="sequence conflict" description="In Ref. 3; AAA17833." evidence="18" ref="3">
    <original>A</original>
    <variation>G</variation>
    <location>
        <position position="635"/>
    </location>
</feature>
<feature type="sequence conflict" description="In Ref. 3; AAA17833." evidence="18" ref="3">
    <original>E</original>
    <variation>D</variation>
    <location>
        <position position="974"/>
    </location>
</feature>
<feature type="sequence conflict" description="In Ref. 3; AAA17833." evidence="18" ref="3">
    <original>A</original>
    <variation>G</variation>
    <location>
        <position position="1253"/>
    </location>
</feature>
<feature type="sequence conflict" description="In Ref. 3; AAA17833." evidence="18" ref="3">
    <original>PR</original>
    <variation>TT</variation>
    <location>
        <begin position="1266"/>
        <end position="1267"/>
    </location>
</feature>
<feature type="strand" evidence="26">
    <location>
        <begin position="428"/>
        <end position="433"/>
    </location>
</feature>
<feature type="turn" evidence="26">
    <location>
        <begin position="437"/>
        <end position="439"/>
    </location>
</feature>
<feature type="strand" evidence="26">
    <location>
        <begin position="440"/>
        <end position="444"/>
    </location>
</feature>
<feature type="turn" evidence="26">
    <location>
        <begin position="447"/>
        <end position="449"/>
    </location>
</feature>
<feature type="strand" evidence="25">
    <location>
        <begin position="457"/>
        <end position="463"/>
    </location>
</feature>
<feature type="strand" evidence="26">
    <location>
        <begin position="478"/>
        <end position="483"/>
    </location>
</feature>
<feature type="helix" evidence="26">
    <location>
        <begin position="484"/>
        <end position="496"/>
    </location>
</feature>
<feature type="strand" evidence="26">
    <location>
        <begin position="499"/>
        <end position="504"/>
    </location>
</feature>
<feature type="strand" evidence="26">
    <location>
        <begin position="507"/>
        <end position="510"/>
    </location>
</feature>
<feature type="helix" evidence="26">
    <location>
        <begin position="520"/>
        <end position="526"/>
    </location>
</feature>
<feature type="strand" evidence="26">
    <location>
        <begin position="529"/>
        <end position="533"/>
    </location>
</feature>
<feature type="helix" evidence="26">
    <location>
        <begin position="541"/>
        <end position="544"/>
    </location>
</feature>
<feature type="strand" evidence="26">
    <location>
        <begin position="547"/>
        <end position="549"/>
    </location>
</feature>
<feature type="strand" evidence="26">
    <location>
        <begin position="554"/>
        <end position="563"/>
    </location>
</feature>
<feature type="helix" evidence="25">
    <location>
        <begin position="693"/>
        <end position="696"/>
    </location>
</feature>
<feature type="helix" evidence="25">
    <location>
        <begin position="698"/>
        <end position="700"/>
    </location>
</feature>
<feature type="strand" evidence="25">
    <location>
        <begin position="701"/>
        <end position="703"/>
    </location>
</feature>
<feature type="helix" evidence="26">
    <location>
        <begin position="714"/>
        <end position="722"/>
    </location>
</feature>
<feature type="helix" evidence="26">
    <location>
        <begin position="724"/>
        <end position="730"/>
    </location>
</feature>
<feature type="helix" evidence="26">
    <location>
        <begin position="731"/>
        <end position="733"/>
    </location>
</feature>
<feature type="helix" evidence="26">
    <location>
        <begin position="738"/>
        <end position="746"/>
    </location>
</feature>
<feature type="strand" evidence="26">
    <location>
        <begin position="751"/>
        <end position="756"/>
    </location>
</feature>
<feature type="helix" evidence="26">
    <location>
        <begin position="757"/>
        <end position="766"/>
    </location>
</feature>
<feature type="helix" evidence="26">
    <location>
        <begin position="768"/>
        <end position="770"/>
    </location>
</feature>
<feature type="strand" evidence="26">
    <location>
        <begin position="772"/>
        <end position="774"/>
    </location>
</feature>
<feature type="helix" evidence="26">
    <location>
        <begin position="775"/>
        <end position="778"/>
    </location>
</feature>
<feature type="strand" evidence="26">
    <location>
        <begin position="781"/>
        <end position="786"/>
    </location>
</feature>
<feature type="strand" evidence="26">
    <location>
        <begin position="789"/>
        <end position="791"/>
    </location>
</feature>
<feature type="helix" evidence="26">
    <location>
        <begin position="797"/>
        <end position="809"/>
    </location>
</feature>
<feature type="helix" evidence="26">
    <location>
        <begin position="812"/>
        <end position="821"/>
    </location>
</feature>
<organism>
    <name type="scientific">Rattus norvegicus</name>
    <name type="common">Rat</name>
    <dbReference type="NCBI Taxonomy" id="10116"/>
    <lineage>
        <taxon>Eukaryota</taxon>
        <taxon>Metazoa</taxon>
        <taxon>Chordata</taxon>
        <taxon>Craniata</taxon>
        <taxon>Vertebrata</taxon>
        <taxon>Euteleostomi</taxon>
        <taxon>Mammalia</taxon>
        <taxon>Eutheria</taxon>
        <taxon>Euarchontoglires</taxon>
        <taxon>Glires</taxon>
        <taxon>Rodentia</taxon>
        <taxon>Myomorpha</taxon>
        <taxon>Muroidea</taxon>
        <taxon>Muridae</taxon>
        <taxon>Murinae</taxon>
        <taxon>Rattus</taxon>
    </lineage>
</organism>
<comment type="function">
    <text evidence="3 7 10 11 12 14">Component of N-methyl-D-aspartate (NMDA) receptors (NMDARs) that function as heterotetrameric, ligand-gated cation channels with high calcium permeability and voltage-dependent block by Mg(2+) (PubMed:21522138, PubMed:23625947, PubMed:7512349). Participates in synaptic plasticity for learning and memory formation (By similarity). Channel activation requires binding of the neurotransmitter L-glutamate to the GluN2 subunit, glycine or D-serine binding to the GluN1 subunit, plus membrane depolarization to eliminate channel inhibition by Mg(2+) (PubMed:21522138, PubMed:23625947, PubMed:7512349). NMDARs mediate simultaneously the potasium efflux and the influx of calcium and sodium (By similarity). Each GluN2 subunit confers differential attributes to channel properties, including activation, deactivation and desensitization kinetics, pH sensitivity, Ca2(+) permeability, and binding to allosteric modulators (PubMed:23625947, PubMed:7512349, PubMed:9463421).</text>
</comment>
<comment type="catalytic activity">
    <reaction evidence="11 12">
        <text>Ca(2+)(in) = Ca(2+)(out)</text>
        <dbReference type="Rhea" id="RHEA:29671"/>
        <dbReference type="ChEBI" id="CHEBI:29108"/>
    </reaction>
</comment>
<comment type="catalytic activity">
    <reaction evidence="12">
        <text>Na(+)(in) = Na(+)(out)</text>
        <dbReference type="Rhea" id="RHEA:34963"/>
        <dbReference type="ChEBI" id="CHEBI:29101"/>
    </reaction>
</comment>
<comment type="catalytic activity">
    <reaction evidence="3">
        <text>K(+)(in) = K(+)(out)</text>
        <dbReference type="Rhea" id="RHEA:29463"/>
        <dbReference type="ChEBI" id="CHEBI:29103"/>
    </reaction>
</comment>
<comment type="subunit">
    <text evidence="10 11 13 15 18">Heterotetramer. Forms heterotetrameric channels composed of two GluN1/zeta subunits (GRIN1), and two identical GluN2/epsilon subunits (GRIN2A, GRIN2B, GRIN2C or GRIN2D) or GluN3 subunits (GRIN3A or GRIN3B) (in vitro) (PubMed:21522138, PubMed:23625947). In vivo, the subunit composition may depend on the expression levels of the different subunits (Probable). Interacts with PDZ domains of PATJ and DLG4 (PubMed:7569905, PubMed:9647694).</text>
</comment>
<comment type="interaction">
    <interactant intactId="EBI-631067">
        <id>Q62645</id>
    </interactant>
    <interactant intactId="EBI-8366894">
        <id>Q63ZW7</id>
        <label>Patj</label>
    </interactant>
    <organismsDiffer>true</organismsDiffer>
    <experiments>3</experiments>
</comment>
<comment type="subcellular location">
    <subcellularLocation>
        <location evidence="10 11 12">Cell membrane</location>
        <topology evidence="18">Multi-pass membrane protein</topology>
    </subcellularLocation>
    <subcellularLocation>
        <location>Postsynaptic cell membrane</location>
        <topology>Multi-pass membrane protein</topology>
    </subcellularLocation>
</comment>
<comment type="alternative products">
    <event type="alternative splicing"/>
    <isoform>
        <id>Q62645-1</id>
        <name>2</name>
        <sequence type="displayed"/>
    </isoform>
    <isoform>
        <id>Q62645-2</id>
        <name>1</name>
        <sequence type="described" ref="VSP_000136"/>
    </isoform>
</comment>
<comment type="tissue specificity">
    <text>Expressed in brain, mainly in the subcortical region.</text>
</comment>
<comment type="developmental stage">
    <text>Already detected in embryonic stages, peaks at postnatal day 7, and decreases thereafter to adult levels.</text>
</comment>
<comment type="domain">
    <text evidence="5">A hydrophobic region that gives rise to the prediction of a transmembrane span does not cross the membrane, but is part of a discontinuously helical region that dips into the membrane and is probably part of the pore and of the selectivity filter.</text>
</comment>
<comment type="similarity">
    <text evidence="18">Belongs to the glutamate-gated ion channel (TC 1.A.10.1) family. NR2D/GRIN2D subfamily.</text>
</comment>
<gene>
    <name evidence="19" type="primary">Grin2d</name>
    <name evidence="16" type="synonym">GluN2D</name>
</gene>
<sequence length="1323" mass="143101">MRGAGGPRGPRGPAKMLLLLALACASPFPEEVPGPGAVGGGTGGARPLNVALVFSGPAYAAEAARLGPAVAAAVRSPGLDVRPVALVLNGSDPRSLVLQLCDLLSGLRVHGVVFEDDSRAPAVAPILDFLSAQTSLPIVAVHGGAALVLTPKEKGSTFLQLGSSTEQQLQVIFEVLEEYDWTSFVAVTTRAPGHRAFLSYIEVLTDGSLVGWEHRGALTLDPGAGEAVLGAQLRSVSAQIRLLFCAREEAEPVFRAAEEAGLTGPGYVWFMVGPQLAGGGGSGVPGEPLLLPGGSPLPAGLFAVRSAGWRDDLARRVAAGVAVVARGAQALLRDYGFLPELGHDCRTQNRTHRGESLHRYFMNITWDNRDYSFNEDGFLVNPSLVVISLTRDRTWEVVGSWEQQTLRLKYPLWSRYGRFLQPVDDTQHLTVATLEERPFVIVEPADPISGTCIRDSVPCRSQLNRTHSPPPDAPRPEKRCCKGFCIDILKRLAHTIGFSYDLYLVTNGKHGKKIDGVWNGMIGEVFYQRADMAIGSLTINEERSEIVDFSVPFVETGISVMVARSNGTVSPSAFLEPYSPAVWVMMFVMCLTVVAVTVFIFEYLSPVGYNRSLATGKRPGGSTFTIGKSIWLLWALVFNNSVPVENPRGTTSKIMVLVWAFFAVIFLASYTANLAAFMIQEEYVDTVSGLSDRKFQRPQEQYPPLKFGTVPNGSTEKNIRSNYPDMHSYMVRYNQPRVEEALTQLKAGKLDAFIYDAAVLNYMARKDEGCKLVTIGSGKVFATTGYGIALHKGSRWKRPIDLALLQFLGDDEIEMLERLWLSGICHNDKIEVMSSKLDIDNMAGVFYMLLVAMGLSLLVFAWEHLVYWRLRHCLGPTHRMDFLLAFSRGMYSCCSAEAAPPPAKPPPPPQPLPSPAYPAARPPPGPAPFVPRERAAADRWRRAKGTGPPGGAAIADGFHRYYGPIEPQGLGLGEARAAPRGAAGRPLSPPTTQPPQKPPPSYFAIVREQEPTEPPAGAFPGFPSPPAPPAAAAAAVGPPLCRLAFEDESPPAPSRWPRSDPESQPLLGGGAGGPSAGAPTAPPPRRAAPPPCAYLDLEPSPSDSEDSESLGGASLGGLEPWWFADFPYPYAERLGPPPGRYWSVDKLGGWRAGSWDYLPPRGGPAWHCRHCASLELLPPPRHLSCSHDGLDGGWWAPPPPPWAAGPPPRRRARCGCPRPHPHRPRASHRAPAAAPHHHRHRRAAGGWDFPPPAPTSRSLEDLSSCPRAAPTRRLTGPSRHARRCPHAAHWGPPLPTASHRRHRGGDLGTRRGSAHFSSLESEV</sequence>
<keyword id="KW-0002">3D-structure</keyword>
<keyword id="KW-0025">Alternative splicing</keyword>
<keyword id="KW-0106">Calcium</keyword>
<keyword id="KW-1003">Cell membrane</keyword>
<keyword id="KW-1015">Disulfide bond</keyword>
<keyword id="KW-0325">Glycoprotein</keyword>
<keyword id="KW-0407">Ion channel</keyword>
<keyword id="KW-0406">Ion transport</keyword>
<keyword id="KW-1071">Ligand-gated ion channel</keyword>
<keyword id="KW-0460">Magnesium</keyword>
<keyword id="KW-0472">Membrane</keyword>
<keyword id="KW-0488">Methylation</keyword>
<keyword id="KW-0597">Phosphoprotein</keyword>
<keyword id="KW-0628">Postsynaptic cell membrane</keyword>
<keyword id="KW-0675">Receptor</keyword>
<keyword id="KW-1185">Reference proteome</keyword>
<keyword id="KW-0732">Signal</keyword>
<keyword id="KW-0770">Synapse</keyword>
<keyword id="KW-0812">Transmembrane</keyword>
<keyword id="KW-1133">Transmembrane helix</keyword>
<keyword id="KW-0813">Transport</keyword>
<dbReference type="EMBL" id="D13213">
    <property type="protein sequence ID" value="BAA02500.1"/>
    <property type="molecule type" value="mRNA"/>
</dbReference>
<dbReference type="EMBL" id="D13214">
    <property type="protein sequence ID" value="BAA02501.1"/>
    <property type="molecule type" value="mRNA"/>
</dbReference>
<dbReference type="EMBL" id="L31611">
    <property type="protein sequence ID" value="AAC37646.1"/>
    <property type="molecule type" value="mRNA"/>
</dbReference>
<dbReference type="EMBL" id="L31612">
    <property type="protein sequence ID" value="AAC37647.1"/>
    <property type="molecule type" value="mRNA"/>
</dbReference>
<dbReference type="EMBL" id="U08260">
    <property type="protein sequence ID" value="AAA17833.1"/>
    <property type="molecule type" value="mRNA"/>
</dbReference>
<dbReference type="PIR" id="I78557">
    <property type="entry name" value="I78557"/>
</dbReference>
<dbReference type="RefSeq" id="NP_073634.2">
    <molecule id="Q62645-1"/>
    <property type="nucleotide sequence ID" value="NM_022797.2"/>
</dbReference>
<dbReference type="RefSeq" id="XP_008757539.1">
    <property type="nucleotide sequence ID" value="XM_008759317.2"/>
</dbReference>
<dbReference type="RefSeq" id="XP_063136781.1">
    <molecule id="Q62645-2"/>
    <property type="nucleotide sequence ID" value="XM_063280711.1"/>
</dbReference>
<dbReference type="PDB" id="3OEK">
    <property type="method" value="X-ray"/>
    <property type="resolution" value="1.90 A"/>
    <property type="chains" value="A=424-564, A=686-827"/>
</dbReference>
<dbReference type="PDB" id="3OEL">
    <property type="method" value="X-ray"/>
    <property type="resolution" value="1.90 A"/>
    <property type="chains" value="A=424-564, A=686-827"/>
</dbReference>
<dbReference type="PDB" id="3OEM">
    <property type="method" value="X-ray"/>
    <property type="resolution" value="1.90 A"/>
    <property type="chains" value="A=424-564, A=686-827"/>
</dbReference>
<dbReference type="PDB" id="3OEN">
    <property type="method" value="X-ray"/>
    <property type="resolution" value="1.80 A"/>
    <property type="chains" value="A=424-564, A=686-827"/>
</dbReference>
<dbReference type="PDB" id="4JWY">
    <property type="method" value="X-ray"/>
    <property type="resolution" value="2.00 A"/>
    <property type="chains" value="A=424-564, A=686-827"/>
</dbReference>
<dbReference type="PDBsum" id="3OEK"/>
<dbReference type="PDBsum" id="3OEL"/>
<dbReference type="PDBsum" id="3OEM"/>
<dbReference type="PDBsum" id="3OEN"/>
<dbReference type="PDBsum" id="4JWY"/>
<dbReference type="SMR" id="Q62645"/>
<dbReference type="BioGRID" id="246577">
    <property type="interactions" value="3"/>
</dbReference>
<dbReference type="ComplexPortal" id="CPX-288">
    <property type="entry name" value="NMDA receptor complex, GluN1-GluN2D"/>
</dbReference>
<dbReference type="FunCoup" id="Q62645">
    <property type="interactions" value="343"/>
</dbReference>
<dbReference type="IntAct" id="Q62645">
    <property type="interactions" value="4"/>
</dbReference>
<dbReference type="MINT" id="Q62645"/>
<dbReference type="STRING" id="10116.ENSRNOP00000075255"/>
<dbReference type="BindingDB" id="Q62645"/>
<dbReference type="ChEMBL" id="CHEMBL303"/>
<dbReference type="DrugCentral" id="Q62645"/>
<dbReference type="GuidetoPHARMACOLOGY" id="459"/>
<dbReference type="GlyCosmos" id="Q62645">
    <property type="glycosylation" value="7 sites, No reported glycans"/>
</dbReference>
<dbReference type="GlyGen" id="Q62645">
    <property type="glycosylation" value="9 sites"/>
</dbReference>
<dbReference type="iPTMnet" id="Q62645"/>
<dbReference type="PhosphoSitePlus" id="Q62645"/>
<dbReference type="PaxDb" id="10116-ENSRNOP00000028615"/>
<dbReference type="Ensembl" id="ENSRNOT00000028615.5">
    <molecule id="Q62645-1"/>
    <property type="protein sequence ID" value="ENSRNOP00000028615.4"/>
    <property type="gene ID" value="ENSRNOG00000021063.5"/>
</dbReference>
<dbReference type="GeneID" id="24412"/>
<dbReference type="KEGG" id="rno:24412"/>
<dbReference type="UCSC" id="RGD:2740">
    <molecule id="Q62645-1"/>
    <property type="organism name" value="rat"/>
</dbReference>
<dbReference type="AGR" id="RGD:2740"/>
<dbReference type="CTD" id="2906"/>
<dbReference type="RGD" id="2740">
    <property type="gene designation" value="Grin2d"/>
</dbReference>
<dbReference type="eggNOG" id="KOG1053">
    <property type="taxonomic scope" value="Eukaryota"/>
</dbReference>
<dbReference type="GeneTree" id="ENSGT00940000159109"/>
<dbReference type="HOGENOM" id="CLU_002039_3_1_1"/>
<dbReference type="InParanoid" id="Q62645"/>
<dbReference type="OMA" id="DRWRRPK"/>
<dbReference type="OrthoDB" id="5984008at2759"/>
<dbReference type="PhylomeDB" id="Q62645"/>
<dbReference type="Reactome" id="R-RNO-438066">
    <property type="pathway name" value="Unblocking of NMDA receptors, glutamate binding and activation"/>
</dbReference>
<dbReference type="Reactome" id="R-RNO-5673001">
    <property type="pathway name" value="RAF/MAP kinase cascade"/>
</dbReference>
<dbReference type="Reactome" id="R-RNO-8849932">
    <property type="pathway name" value="Synaptic adhesion-like molecules"/>
</dbReference>
<dbReference type="Reactome" id="R-RNO-9609736">
    <property type="pathway name" value="Assembly and cell surface presentation of NMDA receptors"/>
</dbReference>
<dbReference type="EvolutionaryTrace" id="Q62645"/>
<dbReference type="PRO" id="PR:Q62645"/>
<dbReference type="Proteomes" id="UP000002494">
    <property type="component" value="Chromosome 1"/>
</dbReference>
<dbReference type="Bgee" id="ENSRNOG00000021063">
    <property type="expression patterns" value="Expressed in testis and 13 other cell types or tissues"/>
</dbReference>
<dbReference type="ExpressionAtlas" id="Q62645">
    <property type="expression patterns" value="baseline and differential"/>
</dbReference>
<dbReference type="GO" id="GO:0005789">
    <property type="term" value="C:endoplasmic reticulum membrane"/>
    <property type="evidence" value="ECO:0000304"/>
    <property type="project" value="Reactome"/>
</dbReference>
<dbReference type="GO" id="GO:0098978">
    <property type="term" value="C:glutamatergic synapse"/>
    <property type="evidence" value="ECO:0000314"/>
    <property type="project" value="SynGO"/>
</dbReference>
<dbReference type="GO" id="GO:0098686">
    <property type="term" value="C:hippocampal mossy fiber to CA3 synapse"/>
    <property type="evidence" value="ECO:0000314"/>
    <property type="project" value="SynGO"/>
</dbReference>
<dbReference type="GO" id="GO:0008328">
    <property type="term" value="C:ionotropic glutamate receptor complex"/>
    <property type="evidence" value="ECO:0000304"/>
    <property type="project" value="RGD"/>
</dbReference>
<dbReference type="GO" id="GO:0017146">
    <property type="term" value="C:NMDA selective glutamate receptor complex"/>
    <property type="evidence" value="ECO:0000314"/>
    <property type="project" value="UniProtKB"/>
</dbReference>
<dbReference type="GO" id="GO:0005886">
    <property type="term" value="C:plasma membrane"/>
    <property type="evidence" value="ECO:0000314"/>
    <property type="project" value="UniProtKB"/>
</dbReference>
<dbReference type="GO" id="GO:0098839">
    <property type="term" value="C:postsynaptic density membrane"/>
    <property type="evidence" value="ECO:0000314"/>
    <property type="project" value="SynGO"/>
</dbReference>
<dbReference type="GO" id="GO:0045211">
    <property type="term" value="C:postsynaptic membrane"/>
    <property type="evidence" value="ECO:0000314"/>
    <property type="project" value="UniProtKB"/>
</dbReference>
<dbReference type="GO" id="GO:0048787">
    <property type="term" value="C:presynaptic active zone membrane"/>
    <property type="evidence" value="ECO:0000314"/>
    <property type="project" value="SynGO"/>
</dbReference>
<dbReference type="GO" id="GO:0042734">
    <property type="term" value="C:presynaptic membrane"/>
    <property type="evidence" value="ECO:0000314"/>
    <property type="project" value="UniProtKB"/>
</dbReference>
<dbReference type="GO" id="GO:0045202">
    <property type="term" value="C:synapse"/>
    <property type="evidence" value="ECO:0000266"/>
    <property type="project" value="RGD"/>
</dbReference>
<dbReference type="GO" id="GO:0016595">
    <property type="term" value="F:glutamate binding"/>
    <property type="evidence" value="ECO:0000315"/>
    <property type="project" value="RGD"/>
</dbReference>
<dbReference type="GO" id="GO:0022849">
    <property type="term" value="F:glutamate-gated calcium ion channel activity"/>
    <property type="evidence" value="ECO:0000250"/>
    <property type="project" value="UniProtKB"/>
</dbReference>
<dbReference type="GO" id="GO:0004970">
    <property type="term" value="F:glutamate-gated receptor activity"/>
    <property type="evidence" value="ECO:0000314"/>
    <property type="project" value="RGD"/>
</dbReference>
<dbReference type="GO" id="GO:0099507">
    <property type="term" value="F:ligand-gated monoatomic ion channel activity involved in regulation of presynaptic membrane potential"/>
    <property type="evidence" value="ECO:0000314"/>
    <property type="project" value="SynGO"/>
</dbReference>
<dbReference type="GO" id="GO:0005261">
    <property type="term" value="F:monoatomic cation channel activity"/>
    <property type="evidence" value="ECO:0000314"/>
    <property type="project" value="RGD"/>
</dbReference>
<dbReference type="GO" id="GO:0004972">
    <property type="term" value="F:NMDA glutamate receptor activity"/>
    <property type="evidence" value="ECO:0000314"/>
    <property type="project" value="RGD"/>
</dbReference>
<dbReference type="GO" id="GO:1904315">
    <property type="term" value="F:transmitter-gated monoatomic ion channel activity involved in regulation of postsynaptic membrane potential"/>
    <property type="evidence" value="ECO:0000314"/>
    <property type="project" value="SynGO"/>
</dbReference>
<dbReference type="GO" id="GO:0022843">
    <property type="term" value="F:voltage-gated monoatomic cation channel activity"/>
    <property type="evidence" value="ECO:0000315"/>
    <property type="project" value="RGD"/>
</dbReference>
<dbReference type="GO" id="GO:0008344">
    <property type="term" value="P:adult locomotory behavior"/>
    <property type="evidence" value="ECO:0000266"/>
    <property type="project" value="RGD"/>
</dbReference>
<dbReference type="GO" id="GO:0097553">
    <property type="term" value="P:calcium ion transmembrane import into cytosol"/>
    <property type="evidence" value="ECO:0000250"/>
    <property type="project" value="UniProtKB"/>
</dbReference>
<dbReference type="GO" id="GO:1905232">
    <property type="term" value="P:cellular response to L-glutamate"/>
    <property type="evidence" value="ECO:0000315"/>
    <property type="project" value="RGD"/>
</dbReference>
<dbReference type="GO" id="GO:0060079">
    <property type="term" value="P:excitatory postsynaptic potential"/>
    <property type="evidence" value="ECO:0000318"/>
    <property type="project" value="GO_Central"/>
</dbReference>
<dbReference type="GO" id="GO:0035235">
    <property type="term" value="P:ionotropic glutamate receptor signaling pathway"/>
    <property type="evidence" value="ECO:0000314"/>
    <property type="project" value="ComplexPortal"/>
</dbReference>
<dbReference type="GO" id="GO:0060291">
    <property type="term" value="P:long-term synaptic potentiation"/>
    <property type="evidence" value="ECO:0000318"/>
    <property type="project" value="GO_Central"/>
</dbReference>
<dbReference type="GO" id="GO:0098655">
    <property type="term" value="P:monoatomic cation transmembrane transport"/>
    <property type="evidence" value="ECO:0000314"/>
    <property type="project" value="ComplexPortal"/>
</dbReference>
<dbReference type="GO" id="GO:2000463">
    <property type="term" value="P:positive regulation of excitatory postsynaptic potential"/>
    <property type="evidence" value="ECO:0000314"/>
    <property type="project" value="ComplexPortal"/>
</dbReference>
<dbReference type="GO" id="GO:0051968">
    <property type="term" value="P:positive regulation of synaptic transmission, glutamatergic"/>
    <property type="evidence" value="ECO:0000314"/>
    <property type="project" value="ComplexPortal"/>
</dbReference>
<dbReference type="GO" id="GO:1904062">
    <property type="term" value="P:regulation of monoatomic cation transmembrane transport"/>
    <property type="evidence" value="ECO:0000314"/>
    <property type="project" value="ComplexPortal"/>
</dbReference>
<dbReference type="GO" id="GO:0048168">
    <property type="term" value="P:regulation of neuronal synaptic plasticity"/>
    <property type="evidence" value="ECO:0000303"/>
    <property type="project" value="ComplexPortal"/>
</dbReference>
<dbReference type="GO" id="GO:0051930">
    <property type="term" value="P:regulation of sensory perception of pain"/>
    <property type="evidence" value="ECO:0000266"/>
    <property type="project" value="RGD"/>
</dbReference>
<dbReference type="GO" id="GO:0048167">
    <property type="term" value="P:regulation of synaptic plasticity"/>
    <property type="evidence" value="ECO:0000250"/>
    <property type="project" value="UniProtKB"/>
</dbReference>
<dbReference type="GO" id="GO:0001964">
    <property type="term" value="P:startle response"/>
    <property type="evidence" value="ECO:0000266"/>
    <property type="project" value="RGD"/>
</dbReference>
<dbReference type="GO" id="GO:0035249">
    <property type="term" value="P:synaptic transmission, glutamatergic"/>
    <property type="evidence" value="ECO:0000315"/>
    <property type="project" value="RGD"/>
</dbReference>
<dbReference type="CDD" id="cd06378">
    <property type="entry name" value="PBP1_iGluR_NMDA_NR2"/>
    <property type="match status" value="1"/>
</dbReference>
<dbReference type="CDD" id="cd13718">
    <property type="entry name" value="PBP2_iGluR_NMDA_Nr2"/>
    <property type="match status" value="1"/>
</dbReference>
<dbReference type="FunFam" id="3.40.50.2300:FF:000626">
    <property type="entry name" value="Glutamate ionotropic receptor NMDA type subunit 2D"/>
    <property type="match status" value="1"/>
</dbReference>
<dbReference type="FunFam" id="3.40.190.10:FF:000397">
    <property type="entry name" value="Glutamate receptor ionotropic, NMDA 2D"/>
    <property type="match status" value="1"/>
</dbReference>
<dbReference type="FunFam" id="3.40.190.10:FF:000007">
    <property type="entry name" value="Putative glutamate receptor ionotropic NMDA 2B"/>
    <property type="match status" value="1"/>
</dbReference>
<dbReference type="Gene3D" id="3.40.50.2300">
    <property type="match status" value="2"/>
</dbReference>
<dbReference type="Gene3D" id="3.40.190.10">
    <property type="entry name" value="Periplasmic binding protein-like II"/>
    <property type="match status" value="2"/>
</dbReference>
<dbReference type="InterPro" id="IPR001828">
    <property type="entry name" value="ANF_lig-bd_rcpt"/>
</dbReference>
<dbReference type="InterPro" id="IPR019594">
    <property type="entry name" value="Glu/Gly-bd"/>
</dbReference>
<dbReference type="InterPro" id="IPR001508">
    <property type="entry name" value="Iono_Glu_rcpt_met"/>
</dbReference>
<dbReference type="InterPro" id="IPR015683">
    <property type="entry name" value="Ionotropic_Glu_rcpt"/>
</dbReference>
<dbReference type="InterPro" id="IPR001320">
    <property type="entry name" value="Iontro_rcpt_C"/>
</dbReference>
<dbReference type="InterPro" id="IPR028082">
    <property type="entry name" value="Peripla_BP_I"/>
</dbReference>
<dbReference type="PANTHER" id="PTHR18966">
    <property type="entry name" value="IONOTROPIC GLUTAMATE RECEPTOR"/>
    <property type="match status" value="1"/>
</dbReference>
<dbReference type="Pfam" id="PF01094">
    <property type="entry name" value="ANF_receptor"/>
    <property type="match status" value="1"/>
</dbReference>
<dbReference type="Pfam" id="PF00060">
    <property type="entry name" value="Lig_chan"/>
    <property type="match status" value="1"/>
</dbReference>
<dbReference type="Pfam" id="PF10613">
    <property type="entry name" value="Lig_chan-Glu_bd"/>
    <property type="match status" value="1"/>
</dbReference>
<dbReference type="PRINTS" id="PR00177">
    <property type="entry name" value="NMDARECEPTOR"/>
</dbReference>
<dbReference type="SMART" id="SM00918">
    <property type="entry name" value="Lig_chan-Glu_bd"/>
    <property type="match status" value="1"/>
</dbReference>
<dbReference type="SMART" id="SM00079">
    <property type="entry name" value="PBPe"/>
    <property type="match status" value="1"/>
</dbReference>
<dbReference type="SUPFAM" id="SSF53822">
    <property type="entry name" value="Periplasmic binding protein-like I"/>
    <property type="match status" value="1"/>
</dbReference>
<dbReference type="SUPFAM" id="SSF53850">
    <property type="entry name" value="Periplasmic binding protein-like II"/>
    <property type="match status" value="1"/>
</dbReference>
<accession>Q62645</accession>
<accession>Q63381</accession>
<accession>Q63382</accession>
<accession>Q63729</accession>
<accession>Q63730</accession>
<proteinExistence type="evidence at protein level"/>
<reference key="1">
    <citation type="journal article" date="1993" name="J. Biol. Chem.">
        <title>Molecular characterization of the family of the N-methyl-D-aspartate receptor subunits.</title>
        <authorList>
            <person name="Ishii T."/>
            <person name="Moriyoshi K."/>
            <person name="Sugihara H."/>
            <person name="Sakurada K."/>
            <person name="Kadotani H."/>
            <person name="Yokoi M."/>
            <person name="Akazawa C."/>
            <person name="Shigemoto R."/>
            <person name="Mizuno N."/>
            <person name="Masu M."/>
            <person name="Nakanishi S."/>
        </authorList>
    </citation>
    <scope>NUCLEOTIDE SEQUENCE [MRNA] (ISOFORM 1)</scope>
    <scope>NUCLEOTIDE SEQUENCE [MRNA] OF 1265-1356 (ISOFORM 2)</scope>
    <source>
        <strain>Sprague-Dawley</strain>
        <tissue>Forebrain</tissue>
    </source>
</reference>
<reference key="2">
    <citation type="journal article" date="1994" name="Neuron">
        <title>Developmental and regional expression in the rat brain and functional properties of four NMDA receptors.</title>
        <authorList>
            <person name="Monyer H."/>
            <person name="Burnashev N."/>
            <person name="Laurie D.J."/>
            <person name="Sakmann B."/>
            <person name="Seeburg P.H."/>
        </authorList>
    </citation>
    <scope>NUCLEOTIDE SEQUENCE [MRNA] (ISOFORM 2)</scope>
    <scope>FUNCTION</scope>
    <scope>TRANSPORTER ACTIVITY</scope>
    <scope>SUBCELLULAR LOCATION</scope>
    <source>
        <tissue>Brain</tissue>
    </source>
</reference>
<reference key="3">
    <citation type="submission" date="1994-03" db="EMBL/GenBank/DDBJ databases">
        <authorList>
            <person name="Boulter J."/>
            <person name="Pecht G."/>
        </authorList>
    </citation>
    <scope>NUCLEOTIDE SEQUENCE [MRNA] (ISOFORM 2)</scope>
    <source>
        <strain>Sprague-Dawley</strain>
        <tissue>Brain</tissue>
    </source>
</reference>
<reference key="4">
    <citation type="journal article" date="1995" name="Science">
        <title>Domain interaction between NMDA receptor subunits and the postsynaptic density protein PSD-95.</title>
        <authorList>
            <person name="Kornau H.C."/>
            <person name="Schenker L.T."/>
            <person name="Kennedy M.B."/>
            <person name="Seeburg P.H."/>
        </authorList>
    </citation>
    <scope>INTERACTION WITH DLG4</scope>
</reference>
<reference key="5">
    <citation type="journal article" date="1998" name="J. Neurophysiol.">
        <title>Functional and pharmacological differences between recombinant N-methyl-D-aspartate receptors.</title>
        <authorList>
            <person name="Vicini S."/>
            <person name="Wang J.F."/>
            <person name="Li J.H."/>
            <person name="Zhu W.J."/>
            <person name="Wang Y.H."/>
            <person name="Luo J.H."/>
            <person name="Wolfe B.B."/>
            <person name="Grayson D.R."/>
        </authorList>
    </citation>
    <scope>FUNCTION</scope>
</reference>
<reference key="6">
    <citation type="journal article" date="1998" name="Mol. Cell. Neurosci.">
        <title>CIPP, a novel multivalent PDZ domain protein, selectively interacts with Kir4.0 family members, NMDA receptor subunits, neurexins, and neuroligins.</title>
        <authorList>
            <person name="Kurschner C."/>
            <person name="Mermelstein P.G."/>
            <person name="Holden W.T."/>
            <person name="Surmeier D.J."/>
        </authorList>
    </citation>
    <scope>INTERACTION WITH PATJ</scope>
</reference>
<reference evidence="20 21 22 23" key="7">
    <citation type="journal article" date="2011" name="Nat. Commun.">
        <title>Ligand-specific deactivation time course of GluN1/GluN2D NMDA receptors.</title>
        <authorList>
            <person name="Vance K.M."/>
            <person name="Simorowski N."/>
            <person name="Traynelis S.F."/>
            <person name="Furukawa H."/>
        </authorList>
    </citation>
    <scope>X-RAY CRYSTALLOGRAPHY (1.9 ANGSTROMS) OF 424-827 IN COMPLEXES WITH GLUTAMATE AND N-METHYL-D-ASPARTATE</scope>
    <scope>FUNCTION</scope>
    <scope>SUBUNIT</scope>
    <scope>SUBCELLULAR LOCATION</scope>
    <scope>DISULFIDE BONDS</scope>
</reference>
<reference evidence="24" key="8">
    <citation type="journal article" date="2013" name="Mol. Pharmacol.">
        <title>Structural determinants of agonist efficacy at the glutamate binding site of N-methyl-D-aspartate receptors.</title>
        <authorList>
            <person name="Hansen K.B."/>
            <person name="Tajima N."/>
            <person name="Risgaard R."/>
            <person name="Perszyk R.E."/>
            <person name="Jorgensen L."/>
            <person name="Vance K.M."/>
            <person name="Ogden K.K."/>
            <person name="Clausen R.P."/>
            <person name="Furukawa H."/>
            <person name="Traynelis S.F."/>
        </authorList>
    </citation>
    <scope>X-RAY CRYSTALLOGRAPHY (2.00 ANGSTROMS) OF 424-564 AND 632-825 IN COMPLEX WITH GRIN1</scope>
    <scope>FUNCTION</scope>
    <scope>TRANSPORTER ACTIVITY</scope>
    <scope>SUBCELLULAR LOCATION</scope>
    <scope>SUBUNIT</scope>
    <scope>DISULFIDE BONDS</scope>
</reference>
<name>NMDE4_RAT</name>